<protein>
    <recommendedName>
        <fullName evidence="1">Large ribosomal subunit protein uL2</fullName>
    </recommendedName>
    <alternativeName>
        <fullName evidence="3">50S ribosomal protein L2</fullName>
    </alternativeName>
</protein>
<accession>B0R659</accession>
<name>RL2_HALS3</name>
<dbReference type="EMBL" id="AM774415">
    <property type="protein sequence ID" value="CAP14228.1"/>
    <property type="molecule type" value="Genomic_DNA"/>
</dbReference>
<dbReference type="RefSeq" id="WP_010903237.1">
    <property type="nucleotide sequence ID" value="NC_010364.1"/>
</dbReference>
<dbReference type="SMR" id="B0R659"/>
<dbReference type="EnsemblBacteria" id="CAP14228">
    <property type="protein sequence ID" value="CAP14228"/>
    <property type="gene ID" value="OE_3392F"/>
</dbReference>
<dbReference type="KEGG" id="hsl:OE_3392F"/>
<dbReference type="HOGENOM" id="CLU_036235_0_3_2"/>
<dbReference type="PhylomeDB" id="B0R659"/>
<dbReference type="Proteomes" id="UP000001321">
    <property type="component" value="Chromosome"/>
</dbReference>
<dbReference type="GO" id="GO:0022625">
    <property type="term" value="C:cytosolic large ribosomal subunit"/>
    <property type="evidence" value="ECO:0007669"/>
    <property type="project" value="TreeGrafter"/>
</dbReference>
<dbReference type="GO" id="GO:0019843">
    <property type="term" value="F:rRNA binding"/>
    <property type="evidence" value="ECO:0007669"/>
    <property type="project" value="UniProtKB-UniRule"/>
</dbReference>
<dbReference type="GO" id="GO:0003735">
    <property type="term" value="F:structural constituent of ribosome"/>
    <property type="evidence" value="ECO:0007669"/>
    <property type="project" value="InterPro"/>
</dbReference>
<dbReference type="GO" id="GO:0002181">
    <property type="term" value="P:cytoplasmic translation"/>
    <property type="evidence" value="ECO:0007669"/>
    <property type="project" value="TreeGrafter"/>
</dbReference>
<dbReference type="FunFam" id="2.40.50.140:FF:000020">
    <property type="entry name" value="60S ribosomal protein L2"/>
    <property type="match status" value="1"/>
</dbReference>
<dbReference type="FunFam" id="4.10.950.10:FF:000002">
    <property type="entry name" value="60S ribosomal protein L2"/>
    <property type="match status" value="1"/>
</dbReference>
<dbReference type="Gene3D" id="2.30.30.30">
    <property type="match status" value="1"/>
</dbReference>
<dbReference type="Gene3D" id="2.40.50.140">
    <property type="entry name" value="Nucleic acid-binding proteins"/>
    <property type="match status" value="1"/>
</dbReference>
<dbReference type="Gene3D" id="4.10.950.10">
    <property type="entry name" value="Ribosomal protein L2, domain 3"/>
    <property type="match status" value="1"/>
</dbReference>
<dbReference type="HAMAP" id="MF_01320_A">
    <property type="entry name" value="Ribosomal_uL2_A"/>
    <property type="match status" value="1"/>
</dbReference>
<dbReference type="InterPro" id="IPR012340">
    <property type="entry name" value="NA-bd_OB-fold"/>
</dbReference>
<dbReference type="InterPro" id="IPR014722">
    <property type="entry name" value="Rib_uL2_dom2"/>
</dbReference>
<dbReference type="InterPro" id="IPR002171">
    <property type="entry name" value="Ribosomal_uL2"/>
</dbReference>
<dbReference type="InterPro" id="IPR023672">
    <property type="entry name" value="Ribosomal_uL2_arc_euk"/>
</dbReference>
<dbReference type="InterPro" id="IPR022669">
    <property type="entry name" value="Ribosomal_uL2_C"/>
</dbReference>
<dbReference type="InterPro" id="IPR022671">
    <property type="entry name" value="Ribosomal_uL2_CS"/>
</dbReference>
<dbReference type="InterPro" id="IPR014726">
    <property type="entry name" value="Ribosomal_uL2_dom3"/>
</dbReference>
<dbReference type="InterPro" id="IPR022666">
    <property type="entry name" value="Ribosomal_uL2_RNA-bd_dom"/>
</dbReference>
<dbReference type="InterPro" id="IPR008991">
    <property type="entry name" value="Translation_prot_SH3-like_sf"/>
</dbReference>
<dbReference type="NCBIfam" id="NF007180">
    <property type="entry name" value="PRK09612.1"/>
    <property type="match status" value="1"/>
</dbReference>
<dbReference type="PANTHER" id="PTHR13691:SF16">
    <property type="entry name" value="LARGE RIBOSOMAL SUBUNIT PROTEIN UL2"/>
    <property type="match status" value="1"/>
</dbReference>
<dbReference type="PANTHER" id="PTHR13691">
    <property type="entry name" value="RIBOSOMAL PROTEIN L2"/>
    <property type="match status" value="1"/>
</dbReference>
<dbReference type="Pfam" id="PF00181">
    <property type="entry name" value="Ribosomal_L2"/>
    <property type="match status" value="1"/>
</dbReference>
<dbReference type="Pfam" id="PF03947">
    <property type="entry name" value="Ribosomal_L2_C"/>
    <property type="match status" value="1"/>
</dbReference>
<dbReference type="PIRSF" id="PIRSF002158">
    <property type="entry name" value="Ribosomal_L2"/>
    <property type="match status" value="1"/>
</dbReference>
<dbReference type="SMART" id="SM01383">
    <property type="entry name" value="Ribosomal_L2"/>
    <property type="match status" value="1"/>
</dbReference>
<dbReference type="SMART" id="SM01382">
    <property type="entry name" value="Ribosomal_L2_C"/>
    <property type="match status" value="1"/>
</dbReference>
<dbReference type="SUPFAM" id="SSF50249">
    <property type="entry name" value="Nucleic acid-binding proteins"/>
    <property type="match status" value="1"/>
</dbReference>
<dbReference type="SUPFAM" id="SSF50104">
    <property type="entry name" value="Translation proteins SH3-like domain"/>
    <property type="match status" value="1"/>
</dbReference>
<dbReference type="PROSITE" id="PS00467">
    <property type="entry name" value="RIBOSOMAL_L2"/>
    <property type="match status" value="1"/>
</dbReference>
<evidence type="ECO:0000255" key="1">
    <source>
        <dbReference type="HAMAP-Rule" id="MF_01320"/>
    </source>
</evidence>
<evidence type="ECO:0000256" key="2">
    <source>
        <dbReference type="SAM" id="MobiDB-lite"/>
    </source>
</evidence>
<evidence type="ECO:0000305" key="3"/>
<comment type="function">
    <text evidence="1">One of the primary rRNA binding proteins. Required for association of the 30S and 50S subunits to form the 70S ribosome, for tRNA binding and peptide bond formation. It has been suggested to have peptidyltransferase activity; this is somewhat controversial. Makes several contacts with the 16S rRNA in the 70S ribosome.</text>
</comment>
<comment type="subunit">
    <text evidence="1">Part of the 50S ribosomal subunit. Forms a bridge to the 30S subunit in the 70S ribosome.</text>
</comment>
<comment type="similarity">
    <text evidence="1">Belongs to the universal ribosomal protein uL2 family.</text>
</comment>
<gene>
    <name evidence="1" type="primary">rpl2</name>
    <name type="ordered locus">OE_3392F</name>
</gene>
<proteinExistence type="inferred from homology"/>
<feature type="chain" id="PRO_1000141559" description="Large ribosomal subunit protein uL2">
    <location>
        <begin position="1"/>
        <end position="240"/>
    </location>
</feature>
<feature type="region of interest" description="Disordered" evidence="2">
    <location>
        <begin position="199"/>
        <end position="240"/>
    </location>
</feature>
<feature type="compositionally biased region" description="Basic and acidic residues" evidence="2">
    <location>
        <begin position="221"/>
        <end position="231"/>
    </location>
</feature>
<sequence length="240" mass="25449">MGRRIQGQRRGRGTSTFRAPSHRYKAELSHKRTEDTDVLAGEVIDVEHDPARSAPVARVAFEDDDQRLVLASEGVGVGDTIEIGISATIEEGNTLPLAEIPEGVPVCNVESHPGDGGKFARAGGVNADLVTHERDATIVELPSGETKRLSPDCRATIGVVAGGGRTEKPFVKAGNKHHKMKARGTKWPRVRGVAMNAVDHPFGGGGRQHPGRPKSVSRDAAPGRKVGDIASKRTGRGGNE</sequence>
<reference key="1">
    <citation type="journal article" date="2008" name="Genomics">
        <title>Evolution in the laboratory: the genome of Halobacterium salinarum strain R1 compared to that of strain NRC-1.</title>
        <authorList>
            <person name="Pfeiffer F."/>
            <person name="Schuster S.C."/>
            <person name="Broicher A."/>
            <person name="Falb M."/>
            <person name="Palm P."/>
            <person name="Rodewald K."/>
            <person name="Ruepp A."/>
            <person name="Soppa J."/>
            <person name="Tittor J."/>
            <person name="Oesterhelt D."/>
        </authorList>
    </citation>
    <scope>NUCLEOTIDE SEQUENCE [LARGE SCALE GENOMIC DNA]</scope>
    <source>
        <strain>ATCC 29341 / DSM 671 / R1</strain>
    </source>
</reference>
<organism>
    <name type="scientific">Halobacterium salinarum (strain ATCC 29341 / DSM 671 / R1)</name>
    <dbReference type="NCBI Taxonomy" id="478009"/>
    <lineage>
        <taxon>Archaea</taxon>
        <taxon>Methanobacteriati</taxon>
        <taxon>Methanobacteriota</taxon>
        <taxon>Stenosarchaea group</taxon>
        <taxon>Halobacteria</taxon>
        <taxon>Halobacteriales</taxon>
        <taxon>Halobacteriaceae</taxon>
        <taxon>Halobacterium</taxon>
        <taxon>Halobacterium salinarum NRC-34001</taxon>
    </lineage>
</organism>
<keyword id="KW-0687">Ribonucleoprotein</keyword>
<keyword id="KW-0689">Ribosomal protein</keyword>
<keyword id="KW-0694">RNA-binding</keyword>
<keyword id="KW-0699">rRNA-binding</keyword>